<organism>
    <name type="scientific">Streptococcus suis (strain 05ZYH33)</name>
    <dbReference type="NCBI Taxonomy" id="391295"/>
    <lineage>
        <taxon>Bacteria</taxon>
        <taxon>Bacillati</taxon>
        <taxon>Bacillota</taxon>
        <taxon>Bacilli</taxon>
        <taxon>Lactobacillales</taxon>
        <taxon>Streptococcaceae</taxon>
        <taxon>Streptococcus</taxon>
    </lineage>
</organism>
<accession>A4VYE0</accession>
<feature type="chain" id="PRO_1000016697" description="tRNA uridine 5-carboxymethylaminomethyl modification enzyme MnmG">
    <location>
        <begin position="1"/>
        <end position="638"/>
    </location>
</feature>
<feature type="binding site" evidence="1">
    <location>
        <begin position="15"/>
        <end position="20"/>
    </location>
    <ligand>
        <name>FAD</name>
        <dbReference type="ChEBI" id="CHEBI:57692"/>
    </ligand>
</feature>
<feature type="binding site" evidence="1">
    <location>
        <position position="127"/>
    </location>
    <ligand>
        <name>FAD</name>
        <dbReference type="ChEBI" id="CHEBI:57692"/>
    </ligand>
</feature>
<feature type="binding site" evidence="1">
    <location>
        <position position="182"/>
    </location>
    <ligand>
        <name>FAD</name>
        <dbReference type="ChEBI" id="CHEBI:57692"/>
    </ligand>
</feature>
<feature type="binding site" evidence="1">
    <location>
        <begin position="276"/>
        <end position="290"/>
    </location>
    <ligand>
        <name>NAD(+)</name>
        <dbReference type="ChEBI" id="CHEBI:57540"/>
    </ligand>
</feature>
<feature type="binding site" evidence="1">
    <location>
        <position position="373"/>
    </location>
    <ligand>
        <name>FAD</name>
        <dbReference type="ChEBI" id="CHEBI:57692"/>
    </ligand>
</feature>
<dbReference type="EMBL" id="CP000407">
    <property type="protein sequence ID" value="ABP91129.1"/>
    <property type="molecule type" value="Genomic_DNA"/>
</dbReference>
<dbReference type="SMR" id="A4VYE0"/>
<dbReference type="STRING" id="391295.SSU05_2163"/>
<dbReference type="KEGG" id="ssu:SSU05_2163"/>
<dbReference type="eggNOG" id="COG0445">
    <property type="taxonomic scope" value="Bacteria"/>
</dbReference>
<dbReference type="HOGENOM" id="CLU_007831_2_2_9"/>
<dbReference type="PHI-base" id="PHI:11091"/>
<dbReference type="GO" id="GO:0005829">
    <property type="term" value="C:cytosol"/>
    <property type="evidence" value="ECO:0007669"/>
    <property type="project" value="TreeGrafter"/>
</dbReference>
<dbReference type="GO" id="GO:0050660">
    <property type="term" value="F:flavin adenine dinucleotide binding"/>
    <property type="evidence" value="ECO:0007669"/>
    <property type="project" value="UniProtKB-UniRule"/>
</dbReference>
<dbReference type="GO" id="GO:0030488">
    <property type="term" value="P:tRNA methylation"/>
    <property type="evidence" value="ECO:0007669"/>
    <property type="project" value="TreeGrafter"/>
</dbReference>
<dbReference type="GO" id="GO:0002098">
    <property type="term" value="P:tRNA wobble uridine modification"/>
    <property type="evidence" value="ECO:0007669"/>
    <property type="project" value="InterPro"/>
</dbReference>
<dbReference type="FunFam" id="1.10.10.1800:FF:000001">
    <property type="entry name" value="tRNA uridine 5-carboxymethylaminomethyl modification enzyme MnmG"/>
    <property type="match status" value="1"/>
</dbReference>
<dbReference type="FunFam" id="1.10.150.570:FF:000001">
    <property type="entry name" value="tRNA uridine 5-carboxymethylaminomethyl modification enzyme MnmG"/>
    <property type="match status" value="1"/>
</dbReference>
<dbReference type="FunFam" id="3.50.50.60:FF:000002">
    <property type="entry name" value="tRNA uridine 5-carboxymethylaminomethyl modification enzyme MnmG"/>
    <property type="match status" value="1"/>
</dbReference>
<dbReference type="FunFam" id="3.50.50.60:FF:000063">
    <property type="entry name" value="tRNA uridine 5-carboxymethylaminomethyl modification enzyme MnmG"/>
    <property type="match status" value="1"/>
</dbReference>
<dbReference type="Gene3D" id="3.50.50.60">
    <property type="entry name" value="FAD/NAD(P)-binding domain"/>
    <property type="match status" value="2"/>
</dbReference>
<dbReference type="Gene3D" id="1.10.150.570">
    <property type="entry name" value="GidA associated domain, C-terminal subdomain"/>
    <property type="match status" value="1"/>
</dbReference>
<dbReference type="Gene3D" id="1.10.10.1800">
    <property type="entry name" value="tRNA uridine 5-carboxymethylaminomethyl modification enzyme MnmG/GidA"/>
    <property type="match status" value="1"/>
</dbReference>
<dbReference type="HAMAP" id="MF_00129">
    <property type="entry name" value="MnmG_GidA"/>
    <property type="match status" value="1"/>
</dbReference>
<dbReference type="InterPro" id="IPR036188">
    <property type="entry name" value="FAD/NAD-bd_sf"/>
</dbReference>
<dbReference type="InterPro" id="IPR049312">
    <property type="entry name" value="GIDA_C_N"/>
</dbReference>
<dbReference type="InterPro" id="IPR004416">
    <property type="entry name" value="MnmG"/>
</dbReference>
<dbReference type="InterPro" id="IPR002218">
    <property type="entry name" value="MnmG-rel"/>
</dbReference>
<dbReference type="InterPro" id="IPR020595">
    <property type="entry name" value="MnmG-rel_CS"/>
</dbReference>
<dbReference type="InterPro" id="IPR026904">
    <property type="entry name" value="MnmG_C"/>
</dbReference>
<dbReference type="InterPro" id="IPR047001">
    <property type="entry name" value="MnmG_C_subdom"/>
</dbReference>
<dbReference type="InterPro" id="IPR044920">
    <property type="entry name" value="MnmG_C_subdom_sf"/>
</dbReference>
<dbReference type="InterPro" id="IPR040131">
    <property type="entry name" value="MnmG_N"/>
</dbReference>
<dbReference type="NCBIfam" id="TIGR00136">
    <property type="entry name" value="mnmG_gidA"/>
    <property type="match status" value="1"/>
</dbReference>
<dbReference type="PANTHER" id="PTHR11806">
    <property type="entry name" value="GLUCOSE INHIBITED DIVISION PROTEIN A"/>
    <property type="match status" value="1"/>
</dbReference>
<dbReference type="PANTHER" id="PTHR11806:SF0">
    <property type="entry name" value="PROTEIN MTO1 HOMOLOG, MITOCHONDRIAL"/>
    <property type="match status" value="1"/>
</dbReference>
<dbReference type="Pfam" id="PF01134">
    <property type="entry name" value="GIDA"/>
    <property type="match status" value="1"/>
</dbReference>
<dbReference type="Pfam" id="PF21680">
    <property type="entry name" value="GIDA_C_1st"/>
    <property type="match status" value="1"/>
</dbReference>
<dbReference type="Pfam" id="PF13932">
    <property type="entry name" value="SAM_GIDA_C"/>
    <property type="match status" value="1"/>
</dbReference>
<dbReference type="PRINTS" id="PR00411">
    <property type="entry name" value="PNDRDTASEI"/>
</dbReference>
<dbReference type="SMART" id="SM01228">
    <property type="entry name" value="GIDA_assoc_3"/>
    <property type="match status" value="1"/>
</dbReference>
<dbReference type="SUPFAM" id="SSF51905">
    <property type="entry name" value="FAD/NAD(P)-binding domain"/>
    <property type="match status" value="1"/>
</dbReference>
<dbReference type="PROSITE" id="PS01280">
    <property type="entry name" value="GIDA_1"/>
    <property type="match status" value="1"/>
</dbReference>
<dbReference type="PROSITE" id="PS01281">
    <property type="entry name" value="GIDA_2"/>
    <property type="match status" value="1"/>
</dbReference>
<keyword id="KW-0963">Cytoplasm</keyword>
<keyword id="KW-0274">FAD</keyword>
<keyword id="KW-0285">Flavoprotein</keyword>
<keyword id="KW-0520">NAD</keyword>
<keyword id="KW-0819">tRNA processing</keyword>
<protein>
    <recommendedName>
        <fullName evidence="1">tRNA uridine 5-carboxymethylaminomethyl modification enzyme MnmG</fullName>
    </recommendedName>
    <alternativeName>
        <fullName evidence="1">Glucose-inhibited division protein A</fullName>
    </alternativeName>
</protein>
<evidence type="ECO:0000255" key="1">
    <source>
        <dbReference type="HAMAP-Rule" id="MF_00129"/>
    </source>
</evidence>
<comment type="function">
    <text evidence="1">NAD-binding protein involved in the addition of a carboxymethylaminomethyl (cmnm) group at the wobble position (U34) of certain tRNAs, forming tRNA-cmnm(5)s(2)U34.</text>
</comment>
<comment type="cofactor">
    <cofactor evidence="1">
        <name>FAD</name>
        <dbReference type="ChEBI" id="CHEBI:57692"/>
    </cofactor>
</comment>
<comment type="subunit">
    <text evidence="1">Homodimer. Heterotetramer of two MnmE and two MnmG subunits.</text>
</comment>
<comment type="subcellular location">
    <subcellularLocation>
        <location evidence="1">Cytoplasm</location>
    </subcellularLocation>
</comment>
<comment type="similarity">
    <text evidence="1">Belongs to the MnmG family.</text>
</comment>
<name>MNMG_STRSY</name>
<reference key="1">
    <citation type="journal article" date="2007" name="PLoS ONE">
        <title>A glimpse of streptococcal toxic shock syndrome from comparative genomics of S. suis 2 Chinese isolates.</title>
        <authorList>
            <person name="Chen C."/>
            <person name="Tang J."/>
            <person name="Dong W."/>
            <person name="Wang C."/>
            <person name="Feng Y."/>
            <person name="Wang J."/>
            <person name="Zheng F."/>
            <person name="Pan X."/>
            <person name="Liu D."/>
            <person name="Li M."/>
            <person name="Song Y."/>
            <person name="Zhu X."/>
            <person name="Sun H."/>
            <person name="Feng T."/>
            <person name="Guo Z."/>
            <person name="Ju A."/>
            <person name="Ge J."/>
            <person name="Dong Y."/>
            <person name="Sun W."/>
            <person name="Jiang Y."/>
            <person name="Wang J."/>
            <person name="Yan J."/>
            <person name="Yang H."/>
            <person name="Wang X."/>
            <person name="Gao G.F."/>
            <person name="Yang R."/>
            <person name="Wang J."/>
            <person name="Yu J."/>
        </authorList>
    </citation>
    <scope>NUCLEOTIDE SEQUENCE [LARGE SCALE GENOMIC DNA]</scope>
    <source>
        <strain>05ZYH33</strain>
    </source>
</reference>
<sequence>MTHTFAENYDVIVIGAGHAGVEAGLAASRMGCKTLLATINLDMVAFMPCNPSIGGSAKGIVVREIDALGGEMGRNIDKTYIQMKMLNMGKGPAVRALRAQADKAEYASEMKRTVERQENLTLRQTMIDEILVEDGKVIGVRTATNQKFSAKAVVVTTGTALRGEIIIGDLKYSSGPNNSLASITLADNLKELGLEIGRFKTGTPPRVNARTINYEDTEIQPGDEKPNHFSFLSKDEDYLLDQIPCWLTYTNATSHEIINSNLHRAPMFSGIVKGIGPRYCPSIEDKIVRFADKERHQLFLEPEGRNTDEIYVQGLSTSLPEDVQQDLIHSIKGLENAQMMRTGYAIEYDMVMPHQLRATLETKKISGLFTAGQTNGTSGYEEAAGQGIVAGINAALKVQGKPELILKRSDGYIGVMIDDLVTKGTVEPYRLLTSRAEYRLILRHDNADMRLTEIGRQVGLVDDERWQVFQIHKNQFDNEMKRLESIKLKPIKETNEKVVAMGFKPLTDALTAKEFMRRPDVTYADAVAFIGPAAEDLDAKTIELIETEVKYEGYIAKALDQVEKMKRMEEKRIPADIDWDDIDSIATEARQKFKLISPETIGQASRISGVNPADISILMVYLEGRSRSISKNKSKDSH</sequence>
<gene>
    <name evidence="1" type="primary">mnmG</name>
    <name evidence="1" type="synonym">gidA</name>
    <name type="ordered locus">SSU05_2163</name>
</gene>
<proteinExistence type="inferred from homology"/>